<reference key="1">
    <citation type="submission" date="2007-04" db="EMBL/GenBank/DDBJ databases">
        <title>Genome sequence of the thermophilic hydrogen-producing bacterium Caldicellulosiruptor saccharolyticus DSM 8903.</title>
        <authorList>
            <person name="Copeland A."/>
            <person name="Lucas S."/>
            <person name="Lapidus A."/>
            <person name="Barry K."/>
            <person name="Detter J.C."/>
            <person name="Glavina del Rio T."/>
            <person name="Hammon N."/>
            <person name="Israni S."/>
            <person name="Dalin E."/>
            <person name="Tice H."/>
            <person name="Pitluck S."/>
            <person name="Kiss H."/>
            <person name="Brettin T."/>
            <person name="Bruce D."/>
            <person name="Han C."/>
            <person name="Schmutz J."/>
            <person name="Larimer F."/>
            <person name="Land M."/>
            <person name="Hauser L."/>
            <person name="Kyrpides N."/>
            <person name="Lykidis A."/>
            <person name="van de Werken H.J.G."/>
            <person name="Verhaart M.R.A."/>
            <person name="VanFossen A.L."/>
            <person name="Lewis D.L."/>
            <person name="Nichols J.D."/>
            <person name="Goorissen H.P."/>
            <person name="van Niel E.W.J."/>
            <person name="Stams F.J.M."/>
            <person name="Willquist K.U."/>
            <person name="Ward D.E."/>
            <person name="van der Oost J."/>
            <person name="Kelly R.M."/>
            <person name="Kengen S.M.W."/>
            <person name="Richardson P."/>
        </authorList>
    </citation>
    <scope>NUCLEOTIDE SEQUENCE [LARGE SCALE GENOMIC DNA]</scope>
    <source>
        <strain>ATCC 43494 / DSM 8903 / Tp8T 6331</strain>
    </source>
</reference>
<sequence>MAQRIKEEVKSEIEKLKEKGIESTLAVVIVGNDPASRSYVNSKKRTCLELGINSVEYALDTTTTQEQLENLIEKLNQDPKINGILVQLPLPNGLDESRVCKKILPQKDVDGFHPMNVGMLATGIDFEYSIKPCTPFGVIELLKRENIEIKGKHAVVIGRSNIVGKPLALLLLRENATVTICHSYTRDLKDICKTADILVAAVGKPKFVTADMVKEGAVVIDVGINRDETTKKIVGDVDFETVRRVASYITPVPGGVGPMTVAMLMKNTLFATLLQNGLI</sequence>
<keyword id="KW-0028">Amino-acid biosynthesis</keyword>
<keyword id="KW-0368">Histidine biosynthesis</keyword>
<keyword id="KW-0378">Hydrolase</keyword>
<keyword id="KW-0486">Methionine biosynthesis</keyword>
<keyword id="KW-0511">Multifunctional enzyme</keyword>
<keyword id="KW-0521">NADP</keyword>
<keyword id="KW-0554">One-carbon metabolism</keyword>
<keyword id="KW-0560">Oxidoreductase</keyword>
<keyword id="KW-0658">Purine biosynthesis</keyword>
<gene>
    <name evidence="1" type="primary">folD</name>
    <name type="ordered locus">Csac_2142</name>
</gene>
<proteinExistence type="inferred from homology"/>
<feature type="chain" id="PRO_0000340576" description="Bifunctional protein FolD">
    <location>
        <begin position="1"/>
        <end position="279"/>
    </location>
</feature>
<feature type="binding site" evidence="1">
    <location>
        <begin position="158"/>
        <end position="160"/>
    </location>
    <ligand>
        <name>NADP(+)</name>
        <dbReference type="ChEBI" id="CHEBI:58349"/>
    </ligand>
</feature>
<feature type="binding site" evidence="1">
    <location>
        <position position="183"/>
    </location>
    <ligand>
        <name>NADP(+)</name>
        <dbReference type="ChEBI" id="CHEBI:58349"/>
    </ligand>
</feature>
<feature type="binding site" evidence="1">
    <location>
        <position position="224"/>
    </location>
    <ligand>
        <name>NADP(+)</name>
        <dbReference type="ChEBI" id="CHEBI:58349"/>
    </ligand>
</feature>
<organism>
    <name type="scientific">Caldicellulosiruptor saccharolyticus (strain ATCC 43494 / DSM 8903 / Tp8T 6331)</name>
    <dbReference type="NCBI Taxonomy" id="351627"/>
    <lineage>
        <taxon>Bacteria</taxon>
        <taxon>Bacillati</taxon>
        <taxon>Bacillota</taxon>
        <taxon>Bacillota incertae sedis</taxon>
        <taxon>Caldicellulosiruptorales</taxon>
        <taxon>Caldicellulosiruptoraceae</taxon>
        <taxon>Caldicellulosiruptor</taxon>
    </lineage>
</organism>
<accession>A4XLE0</accession>
<name>FOLD_CALS8</name>
<dbReference type="EC" id="1.5.1.5" evidence="1"/>
<dbReference type="EC" id="3.5.4.9" evidence="1"/>
<dbReference type="EMBL" id="CP000679">
    <property type="protein sequence ID" value="ABP67725.1"/>
    <property type="molecule type" value="Genomic_DNA"/>
</dbReference>
<dbReference type="SMR" id="A4XLE0"/>
<dbReference type="STRING" id="351627.Csac_2142"/>
<dbReference type="KEGG" id="csc:Csac_2142"/>
<dbReference type="eggNOG" id="COG0190">
    <property type="taxonomic scope" value="Bacteria"/>
</dbReference>
<dbReference type="HOGENOM" id="CLU_034045_2_1_9"/>
<dbReference type="UniPathway" id="UPA00193"/>
<dbReference type="Proteomes" id="UP000000256">
    <property type="component" value="Chromosome"/>
</dbReference>
<dbReference type="GO" id="GO:0005829">
    <property type="term" value="C:cytosol"/>
    <property type="evidence" value="ECO:0007669"/>
    <property type="project" value="TreeGrafter"/>
</dbReference>
<dbReference type="GO" id="GO:0004477">
    <property type="term" value="F:methenyltetrahydrofolate cyclohydrolase activity"/>
    <property type="evidence" value="ECO:0007669"/>
    <property type="project" value="UniProtKB-UniRule"/>
</dbReference>
<dbReference type="GO" id="GO:0004488">
    <property type="term" value="F:methylenetetrahydrofolate dehydrogenase (NADP+) activity"/>
    <property type="evidence" value="ECO:0007669"/>
    <property type="project" value="UniProtKB-UniRule"/>
</dbReference>
<dbReference type="GO" id="GO:0000105">
    <property type="term" value="P:L-histidine biosynthetic process"/>
    <property type="evidence" value="ECO:0007669"/>
    <property type="project" value="UniProtKB-KW"/>
</dbReference>
<dbReference type="GO" id="GO:0009086">
    <property type="term" value="P:methionine biosynthetic process"/>
    <property type="evidence" value="ECO:0007669"/>
    <property type="project" value="UniProtKB-KW"/>
</dbReference>
<dbReference type="GO" id="GO:0006164">
    <property type="term" value="P:purine nucleotide biosynthetic process"/>
    <property type="evidence" value="ECO:0007669"/>
    <property type="project" value="UniProtKB-KW"/>
</dbReference>
<dbReference type="GO" id="GO:0035999">
    <property type="term" value="P:tetrahydrofolate interconversion"/>
    <property type="evidence" value="ECO:0007669"/>
    <property type="project" value="UniProtKB-UniRule"/>
</dbReference>
<dbReference type="CDD" id="cd01080">
    <property type="entry name" value="NAD_bind_m-THF_DH_Cyclohyd"/>
    <property type="match status" value="1"/>
</dbReference>
<dbReference type="FunFam" id="3.40.50.720:FF:000094">
    <property type="entry name" value="Bifunctional protein FolD"/>
    <property type="match status" value="1"/>
</dbReference>
<dbReference type="FunFam" id="3.40.50.10860:FF:000005">
    <property type="entry name" value="C-1-tetrahydrofolate synthase, cytoplasmic, putative"/>
    <property type="match status" value="1"/>
</dbReference>
<dbReference type="Gene3D" id="3.40.50.10860">
    <property type="entry name" value="Leucine Dehydrogenase, chain A, domain 1"/>
    <property type="match status" value="1"/>
</dbReference>
<dbReference type="Gene3D" id="3.40.50.720">
    <property type="entry name" value="NAD(P)-binding Rossmann-like Domain"/>
    <property type="match status" value="1"/>
</dbReference>
<dbReference type="HAMAP" id="MF_01576">
    <property type="entry name" value="THF_DHG_CYH"/>
    <property type="match status" value="1"/>
</dbReference>
<dbReference type="InterPro" id="IPR046346">
    <property type="entry name" value="Aminoacid_DH-like_N_sf"/>
</dbReference>
<dbReference type="InterPro" id="IPR036291">
    <property type="entry name" value="NAD(P)-bd_dom_sf"/>
</dbReference>
<dbReference type="InterPro" id="IPR000672">
    <property type="entry name" value="THF_DH/CycHdrlase"/>
</dbReference>
<dbReference type="InterPro" id="IPR020630">
    <property type="entry name" value="THF_DH/CycHdrlase_cat_dom"/>
</dbReference>
<dbReference type="InterPro" id="IPR020867">
    <property type="entry name" value="THF_DH/CycHdrlase_CS"/>
</dbReference>
<dbReference type="InterPro" id="IPR020631">
    <property type="entry name" value="THF_DH/CycHdrlase_NAD-bd_dom"/>
</dbReference>
<dbReference type="NCBIfam" id="NF008058">
    <property type="entry name" value="PRK10792.1"/>
    <property type="match status" value="1"/>
</dbReference>
<dbReference type="NCBIfam" id="NF010783">
    <property type="entry name" value="PRK14186.1"/>
    <property type="match status" value="1"/>
</dbReference>
<dbReference type="PANTHER" id="PTHR48099:SF5">
    <property type="entry name" value="C-1-TETRAHYDROFOLATE SYNTHASE, CYTOPLASMIC"/>
    <property type="match status" value="1"/>
</dbReference>
<dbReference type="PANTHER" id="PTHR48099">
    <property type="entry name" value="C-1-TETRAHYDROFOLATE SYNTHASE, CYTOPLASMIC-RELATED"/>
    <property type="match status" value="1"/>
</dbReference>
<dbReference type="Pfam" id="PF00763">
    <property type="entry name" value="THF_DHG_CYH"/>
    <property type="match status" value="1"/>
</dbReference>
<dbReference type="Pfam" id="PF02882">
    <property type="entry name" value="THF_DHG_CYH_C"/>
    <property type="match status" value="1"/>
</dbReference>
<dbReference type="PRINTS" id="PR00085">
    <property type="entry name" value="THFDHDRGNASE"/>
</dbReference>
<dbReference type="SUPFAM" id="SSF53223">
    <property type="entry name" value="Aminoacid dehydrogenase-like, N-terminal domain"/>
    <property type="match status" value="1"/>
</dbReference>
<dbReference type="SUPFAM" id="SSF51735">
    <property type="entry name" value="NAD(P)-binding Rossmann-fold domains"/>
    <property type="match status" value="1"/>
</dbReference>
<dbReference type="PROSITE" id="PS00767">
    <property type="entry name" value="THF_DHG_CYH_2"/>
    <property type="match status" value="1"/>
</dbReference>
<protein>
    <recommendedName>
        <fullName evidence="1">Bifunctional protein FolD</fullName>
    </recommendedName>
    <domain>
        <recommendedName>
            <fullName evidence="1">Methylenetetrahydrofolate dehydrogenase</fullName>
            <ecNumber evidence="1">1.5.1.5</ecNumber>
        </recommendedName>
    </domain>
    <domain>
        <recommendedName>
            <fullName evidence="1">Methenyltetrahydrofolate cyclohydrolase</fullName>
            <ecNumber evidence="1">3.5.4.9</ecNumber>
        </recommendedName>
    </domain>
</protein>
<comment type="function">
    <text evidence="1">Catalyzes the oxidation of 5,10-methylenetetrahydrofolate to 5,10-methenyltetrahydrofolate and then the hydrolysis of 5,10-methenyltetrahydrofolate to 10-formyltetrahydrofolate.</text>
</comment>
<comment type="catalytic activity">
    <reaction evidence="1">
        <text>(6R)-5,10-methylene-5,6,7,8-tetrahydrofolate + NADP(+) = (6R)-5,10-methenyltetrahydrofolate + NADPH</text>
        <dbReference type="Rhea" id="RHEA:22812"/>
        <dbReference type="ChEBI" id="CHEBI:15636"/>
        <dbReference type="ChEBI" id="CHEBI:57455"/>
        <dbReference type="ChEBI" id="CHEBI:57783"/>
        <dbReference type="ChEBI" id="CHEBI:58349"/>
        <dbReference type="EC" id="1.5.1.5"/>
    </reaction>
</comment>
<comment type="catalytic activity">
    <reaction evidence="1">
        <text>(6R)-5,10-methenyltetrahydrofolate + H2O = (6R)-10-formyltetrahydrofolate + H(+)</text>
        <dbReference type="Rhea" id="RHEA:23700"/>
        <dbReference type="ChEBI" id="CHEBI:15377"/>
        <dbReference type="ChEBI" id="CHEBI:15378"/>
        <dbReference type="ChEBI" id="CHEBI:57455"/>
        <dbReference type="ChEBI" id="CHEBI:195366"/>
        <dbReference type="EC" id="3.5.4.9"/>
    </reaction>
</comment>
<comment type="pathway">
    <text evidence="1">One-carbon metabolism; tetrahydrofolate interconversion.</text>
</comment>
<comment type="subunit">
    <text evidence="1">Homodimer.</text>
</comment>
<comment type="similarity">
    <text evidence="1">Belongs to the tetrahydrofolate dehydrogenase/cyclohydrolase family.</text>
</comment>
<evidence type="ECO:0000255" key="1">
    <source>
        <dbReference type="HAMAP-Rule" id="MF_01576"/>
    </source>
</evidence>